<keyword id="KW-0687">Ribonucleoprotein</keyword>
<keyword id="KW-0689">Ribosomal protein</keyword>
<keyword id="KW-0694">RNA-binding</keyword>
<keyword id="KW-0699">rRNA-binding</keyword>
<comment type="function">
    <text evidence="1">Binds to 23S rRNA. Forms part of two intersubunit bridges in the 70S ribosome.</text>
</comment>
<comment type="subunit">
    <text evidence="1">Part of the 50S ribosomal subunit. Forms a cluster with proteins L3 and L19. In the 70S ribosome, L14 and L19 interact and together make contacts with the 16S rRNA in bridges B5 and B8.</text>
</comment>
<comment type="similarity">
    <text evidence="1">Belongs to the universal ribosomal protein uL14 family.</text>
</comment>
<reference key="1">
    <citation type="journal article" date="2007" name="Genome Res.">
        <title>Lateral gene transfer between obligate intracellular bacteria: evidence from the Rickettsia massiliae genome.</title>
        <authorList>
            <person name="Blanc G."/>
            <person name="Ogata H."/>
            <person name="Robert C."/>
            <person name="Audic S."/>
            <person name="Claverie J.-M."/>
            <person name="Raoult D."/>
        </authorList>
    </citation>
    <scope>NUCLEOTIDE SEQUENCE [LARGE SCALE GENOMIC DNA]</scope>
    <source>
        <strain>Mtu5</strain>
    </source>
</reference>
<dbReference type="EMBL" id="CP000683">
    <property type="protein sequence ID" value="ABV85073.1"/>
    <property type="molecule type" value="Genomic_DNA"/>
</dbReference>
<dbReference type="RefSeq" id="WP_012153039.1">
    <property type="nucleotide sequence ID" value="NC_009900.1"/>
</dbReference>
<dbReference type="SMR" id="A8F2D7"/>
<dbReference type="KEGG" id="rms:RMA_1030"/>
<dbReference type="HOGENOM" id="CLU_095071_2_1_5"/>
<dbReference type="Proteomes" id="UP000001311">
    <property type="component" value="Chromosome"/>
</dbReference>
<dbReference type="GO" id="GO:0022625">
    <property type="term" value="C:cytosolic large ribosomal subunit"/>
    <property type="evidence" value="ECO:0007669"/>
    <property type="project" value="TreeGrafter"/>
</dbReference>
<dbReference type="GO" id="GO:0070180">
    <property type="term" value="F:large ribosomal subunit rRNA binding"/>
    <property type="evidence" value="ECO:0007669"/>
    <property type="project" value="TreeGrafter"/>
</dbReference>
<dbReference type="GO" id="GO:0003735">
    <property type="term" value="F:structural constituent of ribosome"/>
    <property type="evidence" value="ECO:0007669"/>
    <property type="project" value="InterPro"/>
</dbReference>
<dbReference type="GO" id="GO:0006412">
    <property type="term" value="P:translation"/>
    <property type="evidence" value="ECO:0007669"/>
    <property type="project" value="UniProtKB-UniRule"/>
</dbReference>
<dbReference type="CDD" id="cd00337">
    <property type="entry name" value="Ribosomal_uL14"/>
    <property type="match status" value="1"/>
</dbReference>
<dbReference type="FunFam" id="2.40.150.20:FF:000001">
    <property type="entry name" value="50S ribosomal protein L14"/>
    <property type="match status" value="1"/>
</dbReference>
<dbReference type="Gene3D" id="2.40.150.20">
    <property type="entry name" value="Ribosomal protein L14"/>
    <property type="match status" value="1"/>
</dbReference>
<dbReference type="HAMAP" id="MF_01367">
    <property type="entry name" value="Ribosomal_uL14"/>
    <property type="match status" value="1"/>
</dbReference>
<dbReference type="InterPro" id="IPR000218">
    <property type="entry name" value="Ribosomal_uL14"/>
</dbReference>
<dbReference type="InterPro" id="IPR005745">
    <property type="entry name" value="Ribosomal_uL14_bac-type"/>
</dbReference>
<dbReference type="InterPro" id="IPR019972">
    <property type="entry name" value="Ribosomal_uL14_CS"/>
</dbReference>
<dbReference type="InterPro" id="IPR036853">
    <property type="entry name" value="Ribosomal_uL14_sf"/>
</dbReference>
<dbReference type="NCBIfam" id="TIGR01067">
    <property type="entry name" value="rplN_bact"/>
    <property type="match status" value="1"/>
</dbReference>
<dbReference type="PANTHER" id="PTHR11761">
    <property type="entry name" value="50S/60S RIBOSOMAL PROTEIN L14/L23"/>
    <property type="match status" value="1"/>
</dbReference>
<dbReference type="PANTHER" id="PTHR11761:SF3">
    <property type="entry name" value="LARGE RIBOSOMAL SUBUNIT PROTEIN UL14M"/>
    <property type="match status" value="1"/>
</dbReference>
<dbReference type="Pfam" id="PF00238">
    <property type="entry name" value="Ribosomal_L14"/>
    <property type="match status" value="1"/>
</dbReference>
<dbReference type="SMART" id="SM01374">
    <property type="entry name" value="Ribosomal_L14"/>
    <property type="match status" value="1"/>
</dbReference>
<dbReference type="SUPFAM" id="SSF50193">
    <property type="entry name" value="Ribosomal protein L14"/>
    <property type="match status" value="1"/>
</dbReference>
<dbReference type="PROSITE" id="PS00049">
    <property type="entry name" value="RIBOSOMAL_L14"/>
    <property type="match status" value="1"/>
</dbReference>
<gene>
    <name evidence="1" type="primary">rplN</name>
    <name type="ordered locus">RMA_1030</name>
</gene>
<name>RL14_RICM5</name>
<feature type="chain" id="PRO_1000068010" description="Large ribosomal subunit protein uL14">
    <location>
        <begin position="1"/>
        <end position="122"/>
    </location>
</feature>
<organism>
    <name type="scientific">Rickettsia massiliae (strain Mtu5)</name>
    <dbReference type="NCBI Taxonomy" id="416276"/>
    <lineage>
        <taxon>Bacteria</taxon>
        <taxon>Pseudomonadati</taxon>
        <taxon>Pseudomonadota</taxon>
        <taxon>Alphaproteobacteria</taxon>
        <taxon>Rickettsiales</taxon>
        <taxon>Rickettsiaceae</taxon>
        <taxon>Rickettsieae</taxon>
        <taxon>Rickettsia</taxon>
        <taxon>spotted fever group</taxon>
    </lineage>
</organism>
<sequence>MIQMQSMLEVADNSGAKKVMCIKVLGGSHHMVAKLGDVIVVSVKDAIPGGKVKKGDVYKGVIVRTKTGVVRPDGSTIKFDKNALVLLNKQDEPIGTRVFGPVTRELRAKKYVRIMSLAEEVL</sequence>
<evidence type="ECO:0000255" key="1">
    <source>
        <dbReference type="HAMAP-Rule" id="MF_01367"/>
    </source>
</evidence>
<evidence type="ECO:0000305" key="2"/>
<proteinExistence type="inferred from homology"/>
<accession>A8F2D7</accession>
<protein>
    <recommendedName>
        <fullName evidence="1">Large ribosomal subunit protein uL14</fullName>
    </recommendedName>
    <alternativeName>
        <fullName evidence="2">50S ribosomal protein L14</fullName>
    </alternativeName>
</protein>